<evidence type="ECO:0000255" key="1">
    <source>
        <dbReference type="HAMAP-Rule" id="MF_00952"/>
    </source>
</evidence>
<evidence type="ECO:0000255" key="2">
    <source>
        <dbReference type="PROSITE-ProRule" id="PRU01383"/>
    </source>
</evidence>
<dbReference type="EC" id="5.6.2.1" evidence="1"/>
<dbReference type="EMBL" id="AE006914">
    <property type="protein sequence ID" value="AAL02987.1"/>
    <property type="molecule type" value="Genomic_DNA"/>
</dbReference>
<dbReference type="PIR" id="A97756">
    <property type="entry name" value="A97756"/>
</dbReference>
<dbReference type="RefSeq" id="WP_010977095.1">
    <property type="nucleotide sequence ID" value="NC_003103.1"/>
</dbReference>
<dbReference type="SMR" id="Q92IH1"/>
<dbReference type="GeneID" id="927585"/>
<dbReference type="KEGG" id="rco:RC0449"/>
<dbReference type="PATRIC" id="fig|272944.4.peg.511"/>
<dbReference type="HOGENOM" id="CLU_002929_4_3_5"/>
<dbReference type="Proteomes" id="UP000000816">
    <property type="component" value="Chromosome"/>
</dbReference>
<dbReference type="GO" id="GO:0005694">
    <property type="term" value="C:chromosome"/>
    <property type="evidence" value="ECO:0007669"/>
    <property type="project" value="InterPro"/>
</dbReference>
<dbReference type="GO" id="GO:0003677">
    <property type="term" value="F:DNA binding"/>
    <property type="evidence" value="ECO:0007669"/>
    <property type="project" value="UniProtKB-KW"/>
</dbReference>
<dbReference type="GO" id="GO:0003917">
    <property type="term" value="F:DNA topoisomerase type I (single strand cut, ATP-independent) activity"/>
    <property type="evidence" value="ECO:0007669"/>
    <property type="project" value="UniProtKB-UniRule"/>
</dbReference>
<dbReference type="GO" id="GO:0008270">
    <property type="term" value="F:zinc ion binding"/>
    <property type="evidence" value="ECO:0007669"/>
    <property type="project" value="UniProtKB-KW"/>
</dbReference>
<dbReference type="GO" id="GO:0006265">
    <property type="term" value="P:DNA topological change"/>
    <property type="evidence" value="ECO:0007669"/>
    <property type="project" value="UniProtKB-UniRule"/>
</dbReference>
<dbReference type="CDD" id="cd00186">
    <property type="entry name" value="TOP1Ac"/>
    <property type="match status" value="1"/>
</dbReference>
<dbReference type="CDD" id="cd03363">
    <property type="entry name" value="TOPRIM_TopoIA_TopoI"/>
    <property type="match status" value="1"/>
</dbReference>
<dbReference type="Gene3D" id="3.40.50.140">
    <property type="match status" value="1"/>
</dbReference>
<dbReference type="Gene3D" id="3.30.65.10">
    <property type="entry name" value="Bacterial Topoisomerase I, domain 1"/>
    <property type="match status" value="1"/>
</dbReference>
<dbReference type="Gene3D" id="1.10.460.10">
    <property type="entry name" value="Topoisomerase I, domain 2"/>
    <property type="match status" value="1"/>
</dbReference>
<dbReference type="Gene3D" id="2.70.20.10">
    <property type="entry name" value="Topoisomerase I, domain 3"/>
    <property type="match status" value="1"/>
</dbReference>
<dbReference type="Gene3D" id="1.10.290.10">
    <property type="entry name" value="Topoisomerase I, domain 4"/>
    <property type="match status" value="1"/>
</dbReference>
<dbReference type="HAMAP" id="MF_00952">
    <property type="entry name" value="Topoisom_1_prok"/>
    <property type="match status" value="1"/>
</dbReference>
<dbReference type="InterPro" id="IPR000380">
    <property type="entry name" value="Topo_IA"/>
</dbReference>
<dbReference type="InterPro" id="IPR003601">
    <property type="entry name" value="Topo_IA_2"/>
</dbReference>
<dbReference type="InterPro" id="IPR023406">
    <property type="entry name" value="Topo_IA_AS"/>
</dbReference>
<dbReference type="InterPro" id="IPR013497">
    <property type="entry name" value="Topo_IA_cen"/>
</dbReference>
<dbReference type="InterPro" id="IPR013824">
    <property type="entry name" value="Topo_IA_cen_sub1"/>
</dbReference>
<dbReference type="InterPro" id="IPR013825">
    <property type="entry name" value="Topo_IA_cen_sub2"/>
</dbReference>
<dbReference type="InterPro" id="IPR013826">
    <property type="entry name" value="Topo_IA_cen_sub3"/>
</dbReference>
<dbReference type="InterPro" id="IPR023405">
    <property type="entry name" value="Topo_IA_core_domain"/>
</dbReference>
<dbReference type="InterPro" id="IPR003602">
    <property type="entry name" value="Topo_IA_DNA-bd_dom"/>
</dbReference>
<dbReference type="InterPro" id="IPR013498">
    <property type="entry name" value="Topo_IA_Znf"/>
</dbReference>
<dbReference type="InterPro" id="IPR005733">
    <property type="entry name" value="TopoI_bac-type"/>
</dbReference>
<dbReference type="InterPro" id="IPR028612">
    <property type="entry name" value="Topoisom_1_IA"/>
</dbReference>
<dbReference type="InterPro" id="IPR025589">
    <property type="entry name" value="Toprim_C_rpt"/>
</dbReference>
<dbReference type="InterPro" id="IPR006171">
    <property type="entry name" value="TOPRIM_dom"/>
</dbReference>
<dbReference type="InterPro" id="IPR034149">
    <property type="entry name" value="TOPRIM_TopoI"/>
</dbReference>
<dbReference type="NCBIfam" id="TIGR01051">
    <property type="entry name" value="topA_bact"/>
    <property type="match status" value="1"/>
</dbReference>
<dbReference type="PANTHER" id="PTHR42785:SF1">
    <property type="entry name" value="DNA TOPOISOMERASE"/>
    <property type="match status" value="1"/>
</dbReference>
<dbReference type="PANTHER" id="PTHR42785">
    <property type="entry name" value="DNA TOPOISOMERASE, TYPE IA, CORE"/>
    <property type="match status" value="1"/>
</dbReference>
<dbReference type="Pfam" id="PF01131">
    <property type="entry name" value="Topoisom_bac"/>
    <property type="match status" value="1"/>
</dbReference>
<dbReference type="Pfam" id="PF01751">
    <property type="entry name" value="Toprim"/>
    <property type="match status" value="1"/>
</dbReference>
<dbReference type="Pfam" id="PF13368">
    <property type="entry name" value="Toprim_C_rpt"/>
    <property type="match status" value="2"/>
</dbReference>
<dbReference type="Pfam" id="PF01396">
    <property type="entry name" value="Zn_ribbon_Top1"/>
    <property type="match status" value="1"/>
</dbReference>
<dbReference type="PRINTS" id="PR00417">
    <property type="entry name" value="PRTPISMRASEI"/>
</dbReference>
<dbReference type="SMART" id="SM00437">
    <property type="entry name" value="TOP1Ac"/>
    <property type="match status" value="1"/>
</dbReference>
<dbReference type="SMART" id="SM00436">
    <property type="entry name" value="TOP1Bc"/>
    <property type="match status" value="1"/>
</dbReference>
<dbReference type="SMART" id="SM00493">
    <property type="entry name" value="TOPRIM"/>
    <property type="match status" value="1"/>
</dbReference>
<dbReference type="SUPFAM" id="SSF56712">
    <property type="entry name" value="Prokaryotic type I DNA topoisomerase"/>
    <property type="match status" value="1"/>
</dbReference>
<dbReference type="SUPFAM" id="SSF57783">
    <property type="entry name" value="Zinc beta-ribbon"/>
    <property type="match status" value="1"/>
</dbReference>
<dbReference type="PROSITE" id="PS00396">
    <property type="entry name" value="TOPO_IA_1"/>
    <property type="match status" value="1"/>
</dbReference>
<dbReference type="PROSITE" id="PS52039">
    <property type="entry name" value="TOPO_IA_2"/>
    <property type="match status" value="1"/>
</dbReference>
<dbReference type="PROSITE" id="PS50880">
    <property type="entry name" value="TOPRIM"/>
    <property type="match status" value="1"/>
</dbReference>
<accession>Q92IH1</accession>
<reference key="1">
    <citation type="journal article" date="2001" name="Science">
        <title>Mechanisms of evolution in Rickettsia conorii and R. prowazekii.</title>
        <authorList>
            <person name="Ogata H."/>
            <person name="Audic S."/>
            <person name="Renesto-Audiffren P."/>
            <person name="Fournier P.-E."/>
            <person name="Barbe V."/>
            <person name="Samson D."/>
            <person name="Roux V."/>
            <person name="Cossart P."/>
            <person name="Weissenbach J."/>
            <person name="Claverie J.-M."/>
            <person name="Raoult D."/>
        </authorList>
    </citation>
    <scope>NUCLEOTIDE SEQUENCE [LARGE SCALE GENOMIC DNA]</scope>
    <source>
        <strain>ATCC VR-613 / Malish 7</strain>
    </source>
</reference>
<comment type="function">
    <text evidence="1">Releases the supercoiling and torsional tension of DNA, which is introduced during the DNA replication and transcription, by transiently cleaving and rejoining one strand of the DNA duplex. Introduces a single-strand break via transesterification at a target site in duplex DNA. The scissile phosphodiester is attacked by the catalytic tyrosine of the enzyme, resulting in the formation of a DNA-(5'-phosphotyrosyl)-enzyme intermediate and the expulsion of a 3'-OH DNA strand. The free DNA strand then undergoes passage around the unbroken strand, thus removing DNA supercoils. Finally, in the religation step, the DNA 3'-OH attacks the covalent intermediate to expel the active-site tyrosine and restore the DNA phosphodiester backbone.</text>
</comment>
<comment type="catalytic activity">
    <reaction evidence="1">
        <text>ATP-independent breakage of single-stranded DNA, followed by passage and rejoining.</text>
        <dbReference type="EC" id="5.6.2.1"/>
    </reaction>
</comment>
<comment type="cofactor">
    <cofactor evidence="1">
        <name>Mg(2+)</name>
        <dbReference type="ChEBI" id="CHEBI:18420"/>
    </cofactor>
</comment>
<comment type="subunit">
    <text evidence="1">Monomer.</text>
</comment>
<comment type="similarity">
    <text evidence="1">Belongs to the type IA topoisomerase family.</text>
</comment>
<sequence>MKLVIVESPAKAKTINKYLGDEFKVIASFGHIRDLPSKKGSVLPDENFAMKYDISDKAGKYVDAIVKDAKKADAVYLATDPDREGESISWHVAEVIKEKNQVKSDDFFKRVAFNEITKKAIIHAVENPRKLDTNLVNAQQARRALDYLVGFTLSPLLWRKLPGCKSAGRVQSVALRLICEREDEIERFKSEEYWDISLKMQNSNNELFTAKLTHVNDQKLEKFSIINEKNAKDLTKKLKSHKFHVDKIEKKQQKRQPQPPFITSSLQQEAARKLGFSAKKTMQIAQKLYEGVDIGKETIGLITYMRTDGVTLSNDAIADIRKLIDKSYGDKYLPTSPRIYKSKVKNAQEAHEAIRPTNITYTPDSLKEKLDKDYYKLYELIWKRTIACQMENVIMDLVVANLASENKEYLAKANGSTIAFDGFYKVYRESMDDEAEEENKMLPPLKEQEPLKTKAVIPNQHFTEPPPRYSEASLVKKLEELGIGRPSTYASILSVLQDRKYVALEKKRFIPEELGRLVTVFLVGFFKKYVEYDFTAGLENELDAIAAGKLEWKAALNNFWSGFNHNIESVNEQKITEIISYVQKALDYHLFGENKESKICPSCNTGELSLKLGKFGAFLACSNYPECTFRKSIVSGNDNNENEGEPAAMPNENKVLGTDKDGVEIYLKKGPYGPYIQLGKQEGKVKPKRSPVPASLNQNDITLDIALKLLSLPLKIGIHKDSDEEIMIGYGKFGPYIKYMGQFISVQKKYDFLNLSLDDAMKLIEENKAKLEKKQA</sequence>
<keyword id="KW-0238">DNA-binding</keyword>
<keyword id="KW-0413">Isomerase</keyword>
<keyword id="KW-0460">Magnesium</keyword>
<keyword id="KW-0479">Metal-binding</keyword>
<keyword id="KW-0799">Topoisomerase</keyword>
<keyword id="KW-0862">Zinc</keyword>
<keyword id="KW-0863">Zinc-finger</keyword>
<proteinExistence type="inferred from homology"/>
<gene>
    <name evidence="1" type="primary">topA</name>
    <name type="ordered locus">RC0449</name>
</gene>
<protein>
    <recommendedName>
        <fullName evidence="1">DNA topoisomerase 1</fullName>
        <ecNumber evidence="1">5.6.2.1</ecNumber>
    </recommendedName>
    <alternativeName>
        <fullName evidence="1">DNA topoisomerase I</fullName>
    </alternativeName>
    <alternativeName>
        <fullName>Omega-protein</fullName>
    </alternativeName>
    <alternativeName>
        <fullName>Relaxing enzyme</fullName>
    </alternativeName>
    <alternativeName>
        <fullName>Swivelase</fullName>
    </alternativeName>
    <alternativeName>
        <fullName>Untwisting enzyme</fullName>
    </alternativeName>
</protein>
<feature type="chain" id="PRO_0000145162" description="DNA topoisomerase 1">
    <location>
        <begin position="1"/>
        <end position="776"/>
    </location>
</feature>
<feature type="domain" description="Toprim" evidence="1">
    <location>
        <begin position="1"/>
        <end position="111"/>
    </location>
</feature>
<feature type="domain" description="Topo IA-type catalytic" evidence="2">
    <location>
        <begin position="132"/>
        <end position="568"/>
    </location>
</feature>
<feature type="zinc finger region" description="C4-type">
    <location>
        <begin position="600"/>
        <end position="627"/>
    </location>
</feature>
<feature type="region of interest" description="Interaction with DNA" evidence="1">
    <location>
        <begin position="166"/>
        <end position="171"/>
    </location>
</feature>
<feature type="active site" description="O-(5'-phospho-DNA)-tyrosine intermediate" evidence="2">
    <location>
        <position position="304"/>
    </location>
</feature>
<feature type="binding site" evidence="1">
    <location>
        <position position="7"/>
    </location>
    <ligand>
        <name>Mg(2+)</name>
        <dbReference type="ChEBI" id="CHEBI:18420"/>
        <note>catalytic</note>
    </ligand>
</feature>
<feature type="binding site" evidence="1">
    <location>
        <position position="80"/>
    </location>
    <ligand>
        <name>Mg(2+)</name>
        <dbReference type="ChEBI" id="CHEBI:18420"/>
        <note>catalytic</note>
    </ligand>
</feature>
<feature type="site" description="Interaction with DNA" evidence="1">
    <location>
        <position position="31"/>
    </location>
</feature>
<feature type="site" description="Interaction with DNA" evidence="1">
    <location>
        <position position="142"/>
    </location>
</feature>
<feature type="site" description="Interaction with DNA" evidence="1">
    <location>
        <position position="143"/>
    </location>
</feature>
<feature type="site" description="Interaction with DNA" evidence="1">
    <location>
        <position position="146"/>
    </location>
</feature>
<feature type="site" description="Interaction with DNA" evidence="1">
    <location>
        <position position="158"/>
    </location>
</feature>
<feature type="site" description="Interaction with DNA" evidence="1">
    <location>
        <position position="306"/>
    </location>
</feature>
<feature type="site" description="Interaction with DNA" evidence="1">
    <location>
        <position position="499"/>
    </location>
</feature>
<organism>
    <name type="scientific">Rickettsia conorii (strain ATCC VR-613 / Malish 7)</name>
    <dbReference type="NCBI Taxonomy" id="272944"/>
    <lineage>
        <taxon>Bacteria</taxon>
        <taxon>Pseudomonadati</taxon>
        <taxon>Pseudomonadota</taxon>
        <taxon>Alphaproteobacteria</taxon>
        <taxon>Rickettsiales</taxon>
        <taxon>Rickettsiaceae</taxon>
        <taxon>Rickettsieae</taxon>
        <taxon>Rickettsia</taxon>
        <taxon>spotted fever group</taxon>
    </lineage>
</organism>
<name>TOP1_RICCN</name>